<name>RT13_SOYBN</name>
<gene>
    <name type="primary">RSP13</name>
</gene>
<accession>Q8LPW2</accession>
<proteinExistence type="inferred from homology"/>
<feature type="transit peptide" description="Mitochondrion" evidence="2">
    <location>
        <begin position="1"/>
        <end position="27"/>
    </location>
</feature>
<feature type="chain" id="PRO_0000030611" description="Small ribosomal subunit protein uS13m">
    <location>
        <begin position="28"/>
        <end position="148"/>
    </location>
</feature>
<feature type="region of interest" description="Disordered" evidence="3">
    <location>
        <begin position="129"/>
        <end position="148"/>
    </location>
</feature>
<feature type="compositionally biased region" description="Basic residues" evidence="3">
    <location>
        <begin position="129"/>
        <end position="142"/>
    </location>
</feature>
<sequence length="148" mass="16663">MFGSARILSDVTLRLRQNLSVHGVRVQNINIGGGVGGEIPDNKRLVYALQNLHGIGRSKAQHIVAELGVENKFVKDLSKRELYSIRELLSKYLIGNDLKKCVERDVGRLVGIQCYRGIRHVDSLPCRGQRTHTNARTRRSRKTFSGSR</sequence>
<organism>
    <name type="scientific">Glycine max</name>
    <name type="common">Soybean</name>
    <name type="synonym">Glycine hispida</name>
    <dbReference type="NCBI Taxonomy" id="3847"/>
    <lineage>
        <taxon>Eukaryota</taxon>
        <taxon>Viridiplantae</taxon>
        <taxon>Streptophyta</taxon>
        <taxon>Embryophyta</taxon>
        <taxon>Tracheophyta</taxon>
        <taxon>Spermatophyta</taxon>
        <taxon>Magnoliopsida</taxon>
        <taxon>eudicotyledons</taxon>
        <taxon>Gunneridae</taxon>
        <taxon>Pentapetalae</taxon>
        <taxon>rosids</taxon>
        <taxon>fabids</taxon>
        <taxon>Fabales</taxon>
        <taxon>Fabaceae</taxon>
        <taxon>Papilionoideae</taxon>
        <taxon>50 kb inversion clade</taxon>
        <taxon>NPAAA clade</taxon>
        <taxon>indigoferoid/millettioid clade</taxon>
        <taxon>Phaseoleae</taxon>
        <taxon>Glycine</taxon>
        <taxon>Glycine subgen. Soja</taxon>
    </lineage>
</organism>
<reference key="1">
    <citation type="journal article" date="2002" name="Plant Cell">
        <title>Genes for two mitochondrial ribosomal proteins in flowering plants are derived from their chloroplast or cytosolic counterparts.</title>
        <authorList>
            <person name="Adams K.L."/>
            <person name="Daley D.O."/>
            <person name="Whelan J."/>
            <person name="Palmer J.D."/>
        </authorList>
    </citation>
    <scope>NUCLEOTIDE SEQUENCE [GENOMIC DNA]</scope>
    <scope>SUBCELLULAR LOCATION</scope>
</reference>
<protein>
    <recommendedName>
        <fullName evidence="5">Small ribosomal subunit protein uS13m</fullName>
    </recommendedName>
    <alternativeName>
        <fullName>Small ribosomal subunit protein S13, mitochondrial</fullName>
    </alternativeName>
</protein>
<comment type="function">
    <text evidence="1">Located at the top of the head of the small subunit, it contacts several helices of the 18S rRNA.</text>
</comment>
<comment type="subunit">
    <text>Part of the small ribosomal subunit.</text>
</comment>
<comment type="subcellular location">
    <subcellularLocation>
        <location evidence="4">Mitochondrion</location>
    </subcellularLocation>
</comment>
<comment type="similarity">
    <text evidence="5">Belongs to the universal ribosomal protein uS13 family.</text>
</comment>
<dbReference type="EMBL" id="AY044157">
    <property type="protein sequence ID" value="AAK94674.1"/>
    <property type="molecule type" value="Genomic_DNA"/>
</dbReference>
<dbReference type="RefSeq" id="NP_001387313.1">
    <property type="nucleotide sequence ID" value="NM_001400384.1"/>
</dbReference>
<dbReference type="RefSeq" id="XP_006574368.1">
    <property type="nucleotide sequence ID" value="XM_006574305.2"/>
</dbReference>
<dbReference type="RefSeq" id="XP_014618628.1">
    <property type="nucleotide sequence ID" value="XM_014763142.1"/>
</dbReference>
<dbReference type="SMR" id="Q8LPW2"/>
<dbReference type="STRING" id="3847.Q8LPW2"/>
<dbReference type="PaxDb" id="3847-GLYMA02G08540.4"/>
<dbReference type="EnsemblPlants" id="KRH70242">
    <property type="protein sequence ID" value="KRH70242"/>
    <property type="gene ID" value="GLYMA_02G078000"/>
</dbReference>
<dbReference type="EnsemblPlants" id="KRH70243">
    <property type="protein sequence ID" value="KRH70243"/>
    <property type="gene ID" value="GLYMA_02G078000"/>
</dbReference>
<dbReference type="EnsemblPlants" id="KRH70244">
    <property type="protein sequence ID" value="KRH70244"/>
    <property type="gene ID" value="GLYMA_02G078000"/>
</dbReference>
<dbReference type="GeneID" id="100527465"/>
<dbReference type="Gramene" id="KRH70242">
    <property type="protein sequence ID" value="KRH70242"/>
    <property type="gene ID" value="GLYMA_02G078000"/>
</dbReference>
<dbReference type="Gramene" id="KRH70243">
    <property type="protein sequence ID" value="KRH70243"/>
    <property type="gene ID" value="GLYMA_02G078000"/>
</dbReference>
<dbReference type="Gramene" id="KRH70244">
    <property type="protein sequence ID" value="KRH70244"/>
    <property type="gene ID" value="GLYMA_02G078000"/>
</dbReference>
<dbReference type="eggNOG" id="KOG3311">
    <property type="taxonomic scope" value="Eukaryota"/>
</dbReference>
<dbReference type="HOGENOM" id="CLU_103849_1_0_1"/>
<dbReference type="InParanoid" id="Q8LPW2"/>
<dbReference type="OMA" id="LVGIQCY"/>
<dbReference type="OrthoDB" id="525520at2759"/>
<dbReference type="Proteomes" id="UP000008827">
    <property type="component" value="Chromosome 2"/>
</dbReference>
<dbReference type="GO" id="GO:0005739">
    <property type="term" value="C:mitochondrion"/>
    <property type="evidence" value="ECO:0000318"/>
    <property type="project" value="GO_Central"/>
</dbReference>
<dbReference type="GO" id="GO:0015935">
    <property type="term" value="C:small ribosomal subunit"/>
    <property type="evidence" value="ECO:0000318"/>
    <property type="project" value="GO_Central"/>
</dbReference>
<dbReference type="GO" id="GO:0019843">
    <property type="term" value="F:rRNA binding"/>
    <property type="evidence" value="ECO:0007669"/>
    <property type="project" value="UniProtKB-KW"/>
</dbReference>
<dbReference type="GO" id="GO:0003735">
    <property type="term" value="F:structural constituent of ribosome"/>
    <property type="evidence" value="ECO:0007669"/>
    <property type="project" value="InterPro"/>
</dbReference>
<dbReference type="GO" id="GO:0006412">
    <property type="term" value="P:translation"/>
    <property type="evidence" value="ECO:0007669"/>
    <property type="project" value="InterPro"/>
</dbReference>
<dbReference type="FunFam" id="1.10.8.50:FF:000001">
    <property type="entry name" value="30S ribosomal protein S13"/>
    <property type="match status" value="1"/>
</dbReference>
<dbReference type="Gene3D" id="1.10.8.50">
    <property type="match status" value="1"/>
</dbReference>
<dbReference type="Gene3D" id="4.10.910.10">
    <property type="entry name" value="30s ribosomal protein s13, domain 2"/>
    <property type="match status" value="1"/>
</dbReference>
<dbReference type="HAMAP" id="MF_01315">
    <property type="entry name" value="Ribosomal_uS13"/>
    <property type="match status" value="1"/>
</dbReference>
<dbReference type="InterPro" id="IPR027437">
    <property type="entry name" value="Rbsml_uS13_C"/>
</dbReference>
<dbReference type="InterPro" id="IPR001892">
    <property type="entry name" value="Ribosomal_uS13"/>
</dbReference>
<dbReference type="InterPro" id="IPR010979">
    <property type="entry name" value="Ribosomal_uS13-like_H2TH"/>
</dbReference>
<dbReference type="InterPro" id="IPR018269">
    <property type="entry name" value="Ribosomal_uS13_CS"/>
</dbReference>
<dbReference type="PANTHER" id="PTHR10871">
    <property type="entry name" value="30S RIBOSOMAL PROTEIN S13/40S RIBOSOMAL PROTEIN S18"/>
    <property type="match status" value="1"/>
</dbReference>
<dbReference type="PANTHER" id="PTHR10871:SF28">
    <property type="entry name" value="SMALL RIBOSOMAL SUBUNIT PROTEIN US13M"/>
    <property type="match status" value="1"/>
</dbReference>
<dbReference type="Pfam" id="PF00416">
    <property type="entry name" value="Ribosomal_S13"/>
    <property type="match status" value="1"/>
</dbReference>
<dbReference type="SUPFAM" id="SSF46946">
    <property type="entry name" value="S13-like H2TH domain"/>
    <property type="match status" value="1"/>
</dbReference>
<dbReference type="PROSITE" id="PS00646">
    <property type="entry name" value="RIBOSOMAL_S13_1"/>
    <property type="match status" value="1"/>
</dbReference>
<dbReference type="PROSITE" id="PS50159">
    <property type="entry name" value="RIBOSOMAL_S13_2"/>
    <property type="match status" value="1"/>
</dbReference>
<keyword id="KW-0496">Mitochondrion</keyword>
<keyword id="KW-1185">Reference proteome</keyword>
<keyword id="KW-0687">Ribonucleoprotein</keyword>
<keyword id="KW-0689">Ribosomal protein</keyword>
<keyword id="KW-0694">RNA-binding</keyword>
<keyword id="KW-0699">rRNA-binding</keyword>
<keyword id="KW-0809">Transit peptide</keyword>
<evidence type="ECO:0000250" key="1"/>
<evidence type="ECO:0000255" key="2"/>
<evidence type="ECO:0000256" key="3">
    <source>
        <dbReference type="SAM" id="MobiDB-lite"/>
    </source>
</evidence>
<evidence type="ECO:0000269" key="4">
    <source>
    </source>
</evidence>
<evidence type="ECO:0000305" key="5"/>